<dbReference type="EC" id="4.1.1.37" evidence="1"/>
<dbReference type="EMBL" id="CP000668">
    <property type="protein sequence ID" value="ABP42082.1"/>
    <property type="molecule type" value="Genomic_DNA"/>
</dbReference>
<dbReference type="RefSeq" id="WP_002210686.1">
    <property type="nucleotide sequence ID" value="NZ_CP009715.1"/>
</dbReference>
<dbReference type="SMR" id="A4TS20"/>
<dbReference type="GeneID" id="57974983"/>
<dbReference type="KEGG" id="ypp:YPDSF_3732"/>
<dbReference type="PATRIC" id="fig|386656.14.peg.792"/>
<dbReference type="UniPathway" id="UPA00251">
    <property type="reaction ID" value="UER00321"/>
</dbReference>
<dbReference type="GO" id="GO:0005829">
    <property type="term" value="C:cytosol"/>
    <property type="evidence" value="ECO:0007669"/>
    <property type="project" value="TreeGrafter"/>
</dbReference>
<dbReference type="GO" id="GO:0004853">
    <property type="term" value="F:uroporphyrinogen decarboxylase activity"/>
    <property type="evidence" value="ECO:0007669"/>
    <property type="project" value="UniProtKB-UniRule"/>
</dbReference>
<dbReference type="GO" id="GO:0019353">
    <property type="term" value="P:protoporphyrinogen IX biosynthetic process from glutamate"/>
    <property type="evidence" value="ECO:0007669"/>
    <property type="project" value="TreeGrafter"/>
</dbReference>
<dbReference type="CDD" id="cd00717">
    <property type="entry name" value="URO-D"/>
    <property type="match status" value="1"/>
</dbReference>
<dbReference type="FunFam" id="3.20.20.210:FF:000001">
    <property type="entry name" value="Uroporphyrinogen decarboxylase"/>
    <property type="match status" value="1"/>
</dbReference>
<dbReference type="Gene3D" id="3.20.20.210">
    <property type="match status" value="1"/>
</dbReference>
<dbReference type="HAMAP" id="MF_00218">
    <property type="entry name" value="URO_D"/>
    <property type="match status" value="1"/>
</dbReference>
<dbReference type="InterPro" id="IPR038071">
    <property type="entry name" value="UROD/MetE-like_sf"/>
</dbReference>
<dbReference type="InterPro" id="IPR006361">
    <property type="entry name" value="Uroporphyrinogen_deCO2ase_HemE"/>
</dbReference>
<dbReference type="InterPro" id="IPR000257">
    <property type="entry name" value="Uroporphyrinogen_deCOase"/>
</dbReference>
<dbReference type="NCBIfam" id="TIGR01464">
    <property type="entry name" value="hemE"/>
    <property type="match status" value="1"/>
</dbReference>
<dbReference type="PANTHER" id="PTHR21091">
    <property type="entry name" value="METHYLTETRAHYDROFOLATE:HOMOCYSTEINE METHYLTRANSFERASE RELATED"/>
    <property type="match status" value="1"/>
</dbReference>
<dbReference type="PANTHER" id="PTHR21091:SF169">
    <property type="entry name" value="UROPORPHYRINOGEN DECARBOXYLASE"/>
    <property type="match status" value="1"/>
</dbReference>
<dbReference type="Pfam" id="PF01208">
    <property type="entry name" value="URO-D"/>
    <property type="match status" value="1"/>
</dbReference>
<dbReference type="SUPFAM" id="SSF51726">
    <property type="entry name" value="UROD/MetE-like"/>
    <property type="match status" value="1"/>
</dbReference>
<dbReference type="PROSITE" id="PS00906">
    <property type="entry name" value="UROD_1"/>
    <property type="match status" value="1"/>
</dbReference>
<dbReference type="PROSITE" id="PS00907">
    <property type="entry name" value="UROD_2"/>
    <property type="match status" value="1"/>
</dbReference>
<comment type="function">
    <text evidence="1">Catalyzes the decarboxylation of four acetate groups of uroporphyrinogen-III to yield coproporphyrinogen-III.</text>
</comment>
<comment type="catalytic activity">
    <reaction evidence="1">
        <text>uroporphyrinogen III + 4 H(+) = coproporphyrinogen III + 4 CO2</text>
        <dbReference type="Rhea" id="RHEA:19865"/>
        <dbReference type="ChEBI" id="CHEBI:15378"/>
        <dbReference type="ChEBI" id="CHEBI:16526"/>
        <dbReference type="ChEBI" id="CHEBI:57308"/>
        <dbReference type="ChEBI" id="CHEBI:57309"/>
        <dbReference type="EC" id="4.1.1.37"/>
    </reaction>
</comment>
<comment type="pathway">
    <text evidence="1">Porphyrin-containing compound metabolism; protoporphyrin-IX biosynthesis; coproporphyrinogen-III from 5-aminolevulinate: step 4/4.</text>
</comment>
<comment type="subunit">
    <text evidence="1">Homodimer.</text>
</comment>
<comment type="subcellular location">
    <subcellularLocation>
        <location evidence="1">Cytoplasm</location>
    </subcellularLocation>
</comment>
<comment type="similarity">
    <text evidence="1">Belongs to the uroporphyrinogen decarboxylase family.</text>
</comment>
<organism>
    <name type="scientific">Yersinia pestis (strain Pestoides F)</name>
    <dbReference type="NCBI Taxonomy" id="386656"/>
    <lineage>
        <taxon>Bacteria</taxon>
        <taxon>Pseudomonadati</taxon>
        <taxon>Pseudomonadota</taxon>
        <taxon>Gammaproteobacteria</taxon>
        <taxon>Enterobacterales</taxon>
        <taxon>Yersiniaceae</taxon>
        <taxon>Yersinia</taxon>
    </lineage>
</organism>
<sequence>MNELKNDRYLRALLRQPVDMTPVWMMRQAGRYLPEYKATRAIAGDFMSLCKNAELACEVTMQPLRRYPLDAAILFSDILTIPDAMGLGLYFETGEGPRFQSPITCRADVEKLPIPDPEQELGYVMNAVRTIRRELAGSVPLIGFSGSPWTLATYMVEGGSSKAFTKLKKMMYAEPQTLHLLLDKLADSVILYLNAQIKAGAQSVMIFDTWGGVLTGRDYHEFSLNYMHKIVDGLIRENEGRRVPVTLFTKGGGPWLEAMAATGCDALGLDWTTDIADARRRVGDKVALQGNMDPSVLYAPPARIEQEVSTILASFGQGEGHVFNLGHGIHQDVPPAHAGAFVNAVHALSRPYHQK</sequence>
<protein>
    <recommendedName>
        <fullName evidence="1">Uroporphyrinogen decarboxylase</fullName>
        <shortName evidence="1">UPD</shortName>
        <shortName evidence="1">URO-D</shortName>
        <ecNumber evidence="1">4.1.1.37</ecNumber>
    </recommendedName>
</protein>
<keyword id="KW-0963">Cytoplasm</keyword>
<keyword id="KW-0210">Decarboxylase</keyword>
<keyword id="KW-0456">Lyase</keyword>
<keyword id="KW-0627">Porphyrin biosynthesis</keyword>
<reference key="1">
    <citation type="submission" date="2007-02" db="EMBL/GenBank/DDBJ databases">
        <title>Complete sequence of chromosome of Yersinia pestis Pestoides F.</title>
        <authorList>
            <consortium name="US DOE Joint Genome Institute"/>
            <person name="Copeland A."/>
            <person name="Lucas S."/>
            <person name="Lapidus A."/>
            <person name="Barry K."/>
            <person name="Detter J.C."/>
            <person name="Glavina del Rio T."/>
            <person name="Hammon N."/>
            <person name="Israni S."/>
            <person name="Dalin E."/>
            <person name="Tice H."/>
            <person name="Pitluck S."/>
            <person name="Di Bartolo G."/>
            <person name="Chain P."/>
            <person name="Malfatti S."/>
            <person name="Shin M."/>
            <person name="Vergez L."/>
            <person name="Schmutz J."/>
            <person name="Larimer F."/>
            <person name="Land M."/>
            <person name="Hauser L."/>
            <person name="Worsham P."/>
            <person name="Chu M."/>
            <person name="Bearden S."/>
            <person name="Garcia E."/>
            <person name="Richardson P."/>
        </authorList>
    </citation>
    <scope>NUCLEOTIDE SEQUENCE [LARGE SCALE GENOMIC DNA]</scope>
    <source>
        <strain>Pestoides F</strain>
    </source>
</reference>
<accession>A4TS20</accession>
<name>DCUP_YERPP</name>
<feature type="chain" id="PRO_1000024005" description="Uroporphyrinogen decarboxylase">
    <location>
        <begin position="1"/>
        <end position="355"/>
    </location>
</feature>
<feature type="binding site" evidence="1">
    <location>
        <begin position="27"/>
        <end position="31"/>
    </location>
    <ligand>
        <name>substrate</name>
    </ligand>
</feature>
<feature type="binding site" evidence="1">
    <location>
        <position position="77"/>
    </location>
    <ligand>
        <name>substrate</name>
    </ligand>
</feature>
<feature type="binding site" evidence="1">
    <location>
        <position position="154"/>
    </location>
    <ligand>
        <name>substrate</name>
    </ligand>
</feature>
<feature type="binding site" evidence="1">
    <location>
        <position position="209"/>
    </location>
    <ligand>
        <name>substrate</name>
    </ligand>
</feature>
<feature type="binding site" evidence="1">
    <location>
        <position position="327"/>
    </location>
    <ligand>
        <name>substrate</name>
    </ligand>
</feature>
<feature type="site" description="Transition state stabilizer" evidence="1">
    <location>
        <position position="77"/>
    </location>
</feature>
<gene>
    <name evidence="1" type="primary">hemE</name>
    <name type="ordered locus">YPDSF_3732</name>
</gene>
<evidence type="ECO:0000255" key="1">
    <source>
        <dbReference type="HAMAP-Rule" id="MF_00218"/>
    </source>
</evidence>
<proteinExistence type="inferred from homology"/>